<dbReference type="EMBL" id="L77246">
    <property type="protein sequence ID" value="AAA96645.1"/>
    <property type="molecule type" value="Genomic_DNA"/>
</dbReference>
<dbReference type="EMBL" id="AL009126">
    <property type="protein sequence ID" value="CAB14089.1"/>
    <property type="molecule type" value="Genomic_DNA"/>
</dbReference>
<dbReference type="PIR" id="D69939">
    <property type="entry name" value="D69939"/>
</dbReference>
<dbReference type="RefSeq" id="WP_004398532.1">
    <property type="nucleotide sequence ID" value="NZ_OZ025638.1"/>
</dbReference>
<dbReference type="SMR" id="P54181"/>
<dbReference type="FunCoup" id="P54181">
    <property type="interactions" value="55"/>
</dbReference>
<dbReference type="STRING" id="224308.BSU21710"/>
<dbReference type="PaxDb" id="224308-BSU21710"/>
<dbReference type="DNASU" id="939104"/>
<dbReference type="EnsemblBacteria" id="CAB14089">
    <property type="protein sequence ID" value="CAB14089"/>
    <property type="gene ID" value="BSU_21710"/>
</dbReference>
<dbReference type="GeneID" id="939104"/>
<dbReference type="KEGG" id="bsu:BSU21710"/>
<dbReference type="PATRIC" id="fig|224308.179.peg.2372"/>
<dbReference type="eggNOG" id="COG0534">
    <property type="taxonomic scope" value="Bacteria"/>
</dbReference>
<dbReference type="InParanoid" id="P54181"/>
<dbReference type="OrthoDB" id="9776324at2"/>
<dbReference type="PhylomeDB" id="P54181"/>
<dbReference type="BioCyc" id="BSUB:BSU21710-MONOMER"/>
<dbReference type="Proteomes" id="UP000001570">
    <property type="component" value="Chromosome"/>
</dbReference>
<dbReference type="GO" id="GO:0005886">
    <property type="term" value="C:plasma membrane"/>
    <property type="evidence" value="ECO:0007669"/>
    <property type="project" value="UniProtKB-SubCell"/>
</dbReference>
<dbReference type="GO" id="GO:0015297">
    <property type="term" value="F:antiporter activity"/>
    <property type="evidence" value="ECO:0007669"/>
    <property type="project" value="UniProtKB-KW"/>
</dbReference>
<dbReference type="GO" id="GO:0042910">
    <property type="term" value="F:xenobiotic transmembrane transporter activity"/>
    <property type="evidence" value="ECO:0007669"/>
    <property type="project" value="InterPro"/>
</dbReference>
<dbReference type="GO" id="GO:0006811">
    <property type="term" value="P:monoatomic ion transport"/>
    <property type="evidence" value="ECO:0007669"/>
    <property type="project" value="UniProtKB-KW"/>
</dbReference>
<dbReference type="CDD" id="cd13138">
    <property type="entry name" value="MATE_yoeA_like"/>
    <property type="match status" value="1"/>
</dbReference>
<dbReference type="InterPro" id="IPR002528">
    <property type="entry name" value="MATE_fam"/>
</dbReference>
<dbReference type="InterPro" id="IPR048279">
    <property type="entry name" value="MdtK-like"/>
</dbReference>
<dbReference type="InterPro" id="IPR052031">
    <property type="entry name" value="Membrane_Transporter-Flippase"/>
</dbReference>
<dbReference type="NCBIfam" id="TIGR00797">
    <property type="entry name" value="matE"/>
    <property type="match status" value="1"/>
</dbReference>
<dbReference type="PANTHER" id="PTHR43549">
    <property type="entry name" value="MULTIDRUG RESISTANCE PROTEIN YPNP-RELATED"/>
    <property type="match status" value="1"/>
</dbReference>
<dbReference type="PANTHER" id="PTHR43549:SF3">
    <property type="entry name" value="MULTIDRUG RESISTANCE PROTEIN YPNP-RELATED"/>
    <property type="match status" value="1"/>
</dbReference>
<dbReference type="Pfam" id="PF01554">
    <property type="entry name" value="MatE"/>
    <property type="match status" value="2"/>
</dbReference>
<dbReference type="PIRSF" id="PIRSF006603">
    <property type="entry name" value="DinF"/>
    <property type="match status" value="1"/>
</dbReference>
<accession>P54181</accession>
<reference key="1">
    <citation type="journal article" date="1996" name="Microbiology">
        <title>Organization of the Bacillus subtilis 168 chromosome between kdg and the attachment site of the SP beta prophage: use of long accurate PCR and yeast artificial chromosomes for sequencing.</title>
        <authorList>
            <person name="Capuano V."/>
            <person name="Galleron N."/>
            <person name="Pujic P."/>
            <person name="Sorokin A."/>
            <person name="Ehrlich S.D."/>
        </authorList>
    </citation>
    <scope>NUCLEOTIDE SEQUENCE [GENOMIC DNA]</scope>
    <source>
        <strain>168 / Marburg / ATCC 6051 / DSM 10 / JCM 1465 / NBRC 13719 / NCIMB 3610 / NRRL NRS-744 / VKM B-501</strain>
    </source>
</reference>
<reference key="2">
    <citation type="journal article" date="1997" name="Nature">
        <title>The complete genome sequence of the Gram-positive bacterium Bacillus subtilis.</title>
        <authorList>
            <person name="Kunst F."/>
            <person name="Ogasawara N."/>
            <person name="Moszer I."/>
            <person name="Albertini A.M."/>
            <person name="Alloni G."/>
            <person name="Azevedo V."/>
            <person name="Bertero M.G."/>
            <person name="Bessieres P."/>
            <person name="Bolotin A."/>
            <person name="Borchert S."/>
            <person name="Borriss R."/>
            <person name="Boursier L."/>
            <person name="Brans A."/>
            <person name="Braun M."/>
            <person name="Brignell S.C."/>
            <person name="Bron S."/>
            <person name="Brouillet S."/>
            <person name="Bruschi C.V."/>
            <person name="Caldwell B."/>
            <person name="Capuano V."/>
            <person name="Carter N.M."/>
            <person name="Choi S.-K."/>
            <person name="Codani J.-J."/>
            <person name="Connerton I.F."/>
            <person name="Cummings N.J."/>
            <person name="Daniel R.A."/>
            <person name="Denizot F."/>
            <person name="Devine K.M."/>
            <person name="Duesterhoeft A."/>
            <person name="Ehrlich S.D."/>
            <person name="Emmerson P.T."/>
            <person name="Entian K.-D."/>
            <person name="Errington J."/>
            <person name="Fabret C."/>
            <person name="Ferrari E."/>
            <person name="Foulger D."/>
            <person name="Fritz C."/>
            <person name="Fujita M."/>
            <person name="Fujita Y."/>
            <person name="Fuma S."/>
            <person name="Galizzi A."/>
            <person name="Galleron N."/>
            <person name="Ghim S.-Y."/>
            <person name="Glaser P."/>
            <person name="Goffeau A."/>
            <person name="Golightly E.J."/>
            <person name="Grandi G."/>
            <person name="Guiseppi G."/>
            <person name="Guy B.J."/>
            <person name="Haga K."/>
            <person name="Haiech J."/>
            <person name="Harwood C.R."/>
            <person name="Henaut A."/>
            <person name="Hilbert H."/>
            <person name="Holsappel S."/>
            <person name="Hosono S."/>
            <person name="Hullo M.-F."/>
            <person name="Itaya M."/>
            <person name="Jones L.-M."/>
            <person name="Joris B."/>
            <person name="Karamata D."/>
            <person name="Kasahara Y."/>
            <person name="Klaerr-Blanchard M."/>
            <person name="Klein C."/>
            <person name="Kobayashi Y."/>
            <person name="Koetter P."/>
            <person name="Koningstein G."/>
            <person name="Krogh S."/>
            <person name="Kumano M."/>
            <person name="Kurita K."/>
            <person name="Lapidus A."/>
            <person name="Lardinois S."/>
            <person name="Lauber J."/>
            <person name="Lazarevic V."/>
            <person name="Lee S.-M."/>
            <person name="Levine A."/>
            <person name="Liu H."/>
            <person name="Masuda S."/>
            <person name="Mauel C."/>
            <person name="Medigue C."/>
            <person name="Medina N."/>
            <person name="Mellado R.P."/>
            <person name="Mizuno M."/>
            <person name="Moestl D."/>
            <person name="Nakai S."/>
            <person name="Noback M."/>
            <person name="Noone D."/>
            <person name="O'Reilly M."/>
            <person name="Ogawa K."/>
            <person name="Ogiwara A."/>
            <person name="Oudega B."/>
            <person name="Park S.-H."/>
            <person name="Parro V."/>
            <person name="Pohl T.M."/>
            <person name="Portetelle D."/>
            <person name="Porwollik S."/>
            <person name="Prescott A.M."/>
            <person name="Presecan E."/>
            <person name="Pujic P."/>
            <person name="Purnelle B."/>
            <person name="Rapoport G."/>
            <person name="Rey M."/>
            <person name="Reynolds S."/>
            <person name="Rieger M."/>
            <person name="Rivolta C."/>
            <person name="Rocha E."/>
            <person name="Roche B."/>
            <person name="Rose M."/>
            <person name="Sadaie Y."/>
            <person name="Sato T."/>
            <person name="Scanlan E."/>
            <person name="Schleich S."/>
            <person name="Schroeter R."/>
            <person name="Scoffone F."/>
            <person name="Sekiguchi J."/>
            <person name="Sekowska A."/>
            <person name="Seror S.J."/>
            <person name="Serror P."/>
            <person name="Shin B.-S."/>
            <person name="Soldo B."/>
            <person name="Sorokin A."/>
            <person name="Tacconi E."/>
            <person name="Takagi T."/>
            <person name="Takahashi H."/>
            <person name="Takemaru K."/>
            <person name="Takeuchi M."/>
            <person name="Tamakoshi A."/>
            <person name="Tanaka T."/>
            <person name="Terpstra P."/>
            <person name="Tognoni A."/>
            <person name="Tosato V."/>
            <person name="Uchiyama S."/>
            <person name="Vandenbol M."/>
            <person name="Vannier F."/>
            <person name="Vassarotti A."/>
            <person name="Viari A."/>
            <person name="Wambutt R."/>
            <person name="Wedler E."/>
            <person name="Wedler H."/>
            <person name="Weitzenegger T."/>
            <person name="Winters P."/>
            <person name="Wipat A."/>
            <person name="Yamamoto H."/>
            <person name="Yamane K."/>
            <person name="Yasumoto K."/>
            <person name="Yata K."/>
            <person name="Yoshida K."/>
            <person name="Yoshikawa H.-F."/>
            <person name="Zumstein E."/>
            <person name="Yoshikawa H."/>
            <person name="Danchin A."/>
        </authorList>
    </citation>
    <scope>NUCLEOTIDE SEQUENCE [LARGE SCALE GENOMIC DNA]</scope>
    <source>
        <strain>168</strain>
    </source>
</reference>
<feature type="chain" id="PRO_0000049715" description="Probable multidrug resistance protein YpnP">
    <location>
        <begin position="1"/>
        <end position="445"/>
    </location>
</feature>
<feature type="transmembrane region" description="Helical" evidence="1">
    <location>
        <begin position="15"/>
        <end position="35"/>
    </location>
</feature>
<feature type="transmembrane region" description="Helical" evidence="1">
    <location>
        <begin position="49"/>
        <end position="69"/>
    </location>
</feature>
<feature type="transmembrane region" description="Helical" evidence="1">
    <location>
        <begin position="95"/>
        <end position="115"/>
    </location>
</feature>
<feature type="transmembrane region" description="Helical" evidence="1">
    <location>
        <begin position="136"/>
        <end position="156"/>
    </location>
</feature>
<feature type="transmembrane region" description="Helical" evidence="1">
    <location>
        <begin position="168"/>
        <end position="188"/>
    </location>
</feature>
<feature type="transmembrane region" description="Helical" evidence="1">
    <location>
        <begin position="194"/>
        <end position="214"/>
    </location>
</feature>
<feature type="transmembrane region" description="Helical" evidence="1">
    <location>
        <begin position="240"/>
        <end position="260"/>
    </location>
</feature>
<feature type="transmembrane region" description="Helical" evidence="1">
    <location>
        <begin position="277"/>
        <end position="297"/>
    </location>
</feature>
<feature type="transmembrane region" description="Helical" evidence="1">
    <location>
        <begin position="314"/>
        <end position="334"/>
    </location>
</feature>
<feature type="transmembrane region" description="Helical" evidence="1">
    <location>
        <begin position="355"/>
        <end position="375"/>
    </location>
</feature>
<feature type="transmembrane region" description="Helical" evidence="1">
    <location>
        <begin position="384"/>
        <end position="404"/>
    </location>
</feature>
<feature type="transmembrane region" description="Helical" evidence="1">
    <location>
        <begin position="411"/>
        <end position="431"/>
    </location>
</feature>
<proteinExistence type="inferred from homology"/>
<comment type="subcellular location">
    <subcellularLocation>
        <location evidence="2">Cell membrane</location>
        <topology evidence="2">Multi-pass membrane protein</topology>
    </subcellularLocation>
</comment>
<comment type="similarity">
    <text evidence="2">Belongs to the multi antimicrobial extrusion (MATE) (TC 2.A.66.1) family.</text>
</comment>
<gene>
    <name type="primary">ypnP</name>
    <name type="ordered locus">BSU21710</name>
</gene>
<organism>
    <name type="scientific">Bacillus subtilis (strain 168)</name>
    <dbReference type="NCBI Taxonomy" id="224308"/>
    <lineage>
        <taxon>Bacteria</taxon>
        <taxon>Bacillati</taxon>
        <taxon>Bacillota</taxon>
        <taxon>Bacilli</taxon>
        <taxon>Bacillales</taxon>
        <taxon>Bacillaceae</taxon>
        <taxon>Bacillus</taxon>
    </lineage>
</organism>
<name>YPNP_BACSU</name>
<protein>
    <recommendedName>
        <fullName>Probable multidrug resistance protein YpnP</fullName>
    </recommendedName>
</protein>
<sequence>MKAYDFTQGNVLKQLVLFSMPIMLGNALQVSFQFIDSLWIGNLLGAKALGAAAVSSTIVLTVLSFILGLNNATLTILSQQKGKDDIKGMASYINAFVVLLTGLSIGFGAAGFFLSELLLRLLKTPESMIPLAETYLQIQFIGILFLFGYNFISTVLRALGDSKTPLRFIAFAVVLNTVLAPLFISVFRMGIAGAAYSTILSQGIAFLYGLFYVIKHKLVPFSIPRMPKWEESALILKLGIPAGLQMMVITGGMMAIMSVVNSYGDHVVSGFGAVQRLDSIITLPAMAAGTAVNSMAGQNIGIGNEKRVGTIARLGVIAVISCMLVIAVMIWVFGKYLIRLFISEPDAVAFGEQYLKWIAFFYPFIGVNFVLNGIVRAAGAMLQVLVLNLISFWVLRYPFTALFSAWLGQKGIGLGIGMSFLFSSCAAFLYYRYGRWKAMKLFTEK</sequence>
<keyword id="KW-0050">Antiport</keyword>
<keyword id="KW-1003">Cell membrane</keyword>
<keyword id="KW-0406">Ion transport</keyword>
<keyword id="KW-0472">Membrane</keyword>
<keyword id="KW-1185">Reference proteome</keyword>
<keyword id="KW-0812">Transmembrane</keyword>
<keyword id="KW-1133">Transmembrane helix</keyword>
<keyword id="KW-0813">Transport</keyword>
<evidence type="ECO:0000255" key="1"/>
<evidence type="ECO:0000305" key="2"/>